<proteinExistence type="evidence at protein level"/>
<accession>Q9HW91</accession>
<accession>O32443</accession>
<evidence type="ECO:0000255" key="1"/>
<evidence type="ECO:0000255" key="2">
    <source>
        <dbReference type="PROSITE-ProRule" id="PRU00102"/>
    </source>
</evidence>
<evidence type="ECO:0000255" key="3">
    <source>
        <dbReference type="PROSITE-ProRule" id="PRU00284"/>
    </source>
</evidence>
<evidence type="ECO:0000256" key="4">
    <source>
        <dbReference type="SAM" id="MobiDB-lite"/>
    </source>
</evidence>
<evidence type="ECO:0000269" key="5">
    <source>
    </source>
</evidence>
<evidence type="ECO:0000269" key="6">
    <source>
    </source>
</evidence>
<evidence type="ECO:0000269" key="7">
    <source>
    </source>
</evidence>
<evidence type="ECO:0000269" key="8">
    <source>
    </source>
</evidence>
<evidence type="ECO:0000269" key="9">
    <source>
    </source>
</evidence>
<evidence type="ECO:0000305" key="10"/>
<evidence type="ECO:0000305" key="11">
    <source>
    </source>
</evidence>
<evidence type="ECO:0000312" key="12">
    <source>
        <dbReference type="PDB" id="5LT9"/>
    </source>
</evidence>
<evidence type="ECO:0000312" key="13">
    <source>
        <dbReference type="PDB" id="5LTO"/>
    </source>
</evidence>
<evidence type="ECO:0007744" key="14">
    <source>
        <dbReference type="PDB" id="5LT9"/>
    </source>
</evidence>
<evidence type="ECO:0007744" key="15">
    <source>
        <dbReference type="PDB" id="5LTO"/>
    </source>
</evidence>
<evidence type="ECO:0007829" key="16">
    <source>
        <dbReference type="PDB" id="5LT9"/>
    </source>
</evidence>
<evidence type="ECO:0007829" key="17">
    <source>
        <dbReference type="PDB" id="5LTO"/>
    </source>
</evidence>
<keyword id="KW-0002">3D-structure</keyword>
<keyword id="KW-0997">Cell inner membrane</keyword>
<keyword id="KW-1003">Cell membrane</keyword>
<keyword id="KW-0145">Chemotaxis</keyword>
<keyword id="KW-0472">Membrane</keyword>
<keyword id="KW-0488">Methylation</keyword>
<keyword id="KW-1185">Reference proteome</keyword>
<keyword id="KW-0807">Transducer</keyword>
<keyword id="KW-0812">Transmembrane</keyword>
<keyword id="KW-1133">Transmembrane helix</keyword>
<organism>
    <name type="scientific">Pseudomonas aeruginosa (strain ATCC 15692 / DSM 22644 / CIP 104116 / JCM 14847 / LMG 12228 / 1C / PRS 101 / PAO1)</name>
    <dbReference type="NCBI Taxonomy" id="208964"/>
    <lineage>
        <taxon>Bacteria</taxon>
        <taxon>Pseudomonadati</taxon>
        <taxon>Pseudomonadota</taxon>
        <taxon>Gammaproteobacteria</taxon>
        <taxon>Pseudomonadales</taxon>
        <taxon>Pseudomonadaceae</taxon>
        <taxon>Pseudomonas</taxon>
    </lineage>
</organism>
<protein>
    <recommendedName>
        <fullName>Methyl-accepting chemotaxis protein PctB</fullName>
    </recommendedName>
</protein>
<reference key="1">
    <citation type="journal article" date="1997" name="Microbiology">
        <title>Genetic identification of chemotactic transducers for amino acids in Pseudomonas aeruginosa.</title>
        <authorList>
            <person name="Taguchi K."/>
            <person name="Fukutomi H."/>
            <person name="Kuroda A."/>
            <person name="Kato J."/>
            <person name="Ohtake H."/>
        </authorList>
    </citation>
    <scope>NUCLEOTIDE SEQUENCE [GENOMIC DNA]</scope>
    <scope>FUNCTION</scope>
    <scope>DISRUPTION PHENOTYPE</scope>
    <source>
        <strain>ATCC 15692 / DSM 22644 / CIP 104116 / JCM 14847 / LMG 12228 / 1C / PRS 101 / PAO1</strain>
    </source>
</reference>
<reference key="2">
    <citation type="journal article" date="2000" name="Nature">
        <title>Complete genome sequence of Pseudomonas aeruginosa PAO1, an opportunistic pathogen.</title>
        <authorList>
            <person name="Stover C.K."/>
            <person name="Pham X.-Q.T."/>
            <person name="Erwin A.L."/>
            <person name="Mizoguchi S.D."/>
            <person name="Warrener P."/>
            <person name="Hickey M.J."/>
            <person name="Brinkman F.S.L."/>
            <person name="Hufnagle W.O."/>
            <person name="Kowalik D.J."/>
            <person name="Lagrou M."/>
            <person name="Garber R.L."/>
            <person name="Goltry L."/>
            <person name="Tolentino E."/>
            <person name="Westbrock-Wadman S."/>
            <person name="Yuan Y."/>
            <person name="Brody L.L."/>
            <person name="Coulter S.N."/>
            <person name="Folger K.R."/>
            <person name="Kas A."/>
            <person name="Larbig K."/>
            <person name="Lim R.M."/>
            <person name="Smith K.A."/>
            <person name="Spencer D.H."/>
            <person name="Wong G.K.-S."/>
            <person name="Wu Z."/>
            <person name="Paulsen I.T."/>
            <person name="Reizer J."/>
            <person name="Saier M.H. Jr."/>
            <person name="Hancock R.E.W."/>
            <person name="Lory S."/>
            <person name="Olson M.V."/>
        </authorList>
    </citation>
    <scope>NUCLEOTIDE SEQUENCE [LARGE SCALE GENOMIC DNA]</scope>
    <source>
        <strain>ATCC 15692 / DSM 22644 / CIP 104116 / JCM 14847 / LMG 12228 / 1C / PRS 101 / PAO1</strain>
    </source>
</reference>
<reference key="3">
    <citation type="journal article" date="2005" name="J. Biosci. Bioeng.">
        <title>Identification of chemosensory proteins for trichloroethylene in Pseudomonas aeruginosa.</title>
        <authorList>
            <person name="Shitashiro M."/>
            <person name="Tanaka H."/>
            <person name="Hong C.S."/>
            <person name="Kuroda A."/>
            <person name="Takiguchi N."/>
            <person name="Ohtake H."/>
            <person name="Kato J."/>
        </authorList>
    </citation>
    <scope>FUNCTION IN REPELLENT RESPONSES</scope>
    <scope>DISRUPTION PHENOTYPE</scope>
    <source>
        <strain>ATCC 15692 / DSM 22644 / CIP 104116 / JCM 14847 / LMG 12228 / 1C / PRS 101 / PAO1</strain>
    </source>
</reference>
<reference key="4">
    <citation type="journal article" date="2013" name="Mol. Microbiol.">
        <title>Paralogous chemoreceptors mediate chemotaxis towards protein amino acids and the non-protein amino acid gamma-aminobutyrate (GABA).</title>
        <authorList>
            <person name="Rico-Jimenez M."/>
            <person name="Munoz-Martinez F."/>
            <person name="Garcia-Fontana C."/>
            <person name="Fernandez M."/>
            <person name="Morel B."/>
            <person name="Ortega A."/>
            <person name="Ramos J.L."/>
            <person name="Krell T."/>
        </authorList>
    </citation>
    <scope>FUNCTION</scope>
    <scope>SUBUNIT</scope>
    <scope>DOMAIN</scope>
    <source>
        <strain>ATCC 15692 / DSM 22644 / CIP 104116 / JCM 14847 / LMG 12228 / 1C / PRS 101 / PAO1</strain>
    </source>
</reference>
<reference key="5">
    <citation type="journal article" date="2016" name="PLoS ONE">
        <title>Chemotaxis and binding of Pseudomonas aeruginosa to scratch-wounded human cystic fibrosis airway epithelial cells.</title>
        <authorList>
            <person name="Schwarzer C."/>
            <person name="Fischer H."/>
            <person name="Machen T.E."/>
        </authorList>
    </citation>
    <scope>DISRUPTION PHENOTYPE</scope>
    <source>
        <strain>ATCC 15692 / DSM 22644 / CIP 104116 / JCM 14847 / LMG 12228 / 1C / PRS 101 / PAO1</strain>
    </source>
</reference>
<reference evidence="14 15" key="6">
    <citation type="journal article" date="2020" name="MBio">
        <title>How bacterial chemoreceptors evolve novel ligand specificities.</title>
        <authorList>
            <person name="Gavira J.A."/>
            <person name="Gumerov V.M."/>
            <person name="Rico-Jimenez M."/>
            <person name="Petukh M."/>
            <person name="Upadhyay A.A."/>
            <person name="Ortega A."/>
            <person name="Matilla M.A."/>
            <person name="Zhulin I.B."/>
            <person name="Krell T."/>
        </authorList>
    </citation>
    <scope>X-RAY CRYSTALLOGRAPHY (3.00 ANGSTROMS) OF 30-277 IN COMPLEXES WITH GLUTAMINE AND ARGININE</scope>
    <scope>MOLECULAR EVOLUTION</scope>
    <source>
        <strain>ATCC 15692 / DSM 22644 / CIP 104116 / JCM 14847 / LMG 12228 / 1C / PRS 101 / PAO1</strain>
    </source>
</reference>
<comment type="function">
    <text evidence="5 6 9">Chemotactic-signal transducers respond to changes in the concentration of attractants and repellents in the environment, transduce a signal from the outside to the inside of the cell, and facilitate sensory adaptation through the variation of the level of methylation. Responds to L-Arg, L-Gln, L-Ala, L-Glu, L-Lys, L-Met and L-Tyr. Also involved in repellent responses to trichloroethylene (TCE), chloroform and methylthiocyanate.</text>
</comment>
<comment type="subunit">
    <text evidence="6">Monomer in the absence and presence of ligands.</text>
</comment>
<comment type="subcellular location">
    <subcellularLocation>
        <location evidence="10">Cell inner membrane</location>
        <topology evidence="1">Multi-pass membrane protein</topology>
    </subcellularLocation>
</comment>
<comment type="domain">
    <text evidence="6">The ligand binding region binds directly to 5 L-amino acids.</text>
</comment>
<comment type="disruption phenotype">
    <text evidence="5 7 9">Mutant is defective in taxis toward L-Gln. Mutant also shows decreased chemotactic responses to TCE, chloroform and methylthiocyanate (PubMed:16233808, PubMed:9353923). The deletion mutant does not show significant reduction in swarming or immobilization near epithelial wounds, but the pctABC triple deletion mutant shows a significant reduction in chemotaxis and immobilization along wounds of human cystic fibrosis airway epithelial cells (PubMed:27031335).</text>
</comment>
<comment type="miscellaneous">
    <text evidence="11">PctA has a broad ligand range and responds to most of the proteinogenic amino acids, whereas PctB and PctC have a much narrower range and show strong ligand preference for L-glutamine and gamma-aminobutyrate, respectively. These receptors are paralogs: pctA gene duplication in the common ancestor of the genus Pseudomonas led to pctC, whereas pctB originated through another, independent pctA duplication.</text>
</comment>
<comment type="similarity">
    <text evidence="10">Belongs to the methyl-accepting chemotaxis (MCP) protein family.</text>
</comment>
<dbReference type="EMBL" id="D86947">
    <property type="protein sequence ID" value="BAA23413.1"/>
    <property type="molecule type" value="Genomic_DNA"/>
</dbReference>
<dbReference type="EMBL" id="AE004091">
    <property type="protein sequence ID" value="AAG07698.1"/>
    <property type="molecule type" value="Genomic_DNA"/>
</dbReference>
<dbReference type="PIR" id="C83107">
    <property type="entry name" value="C83107"/>
</dbReference>
<dbReference type="RefSeq" id="NP_253000.1">
    <property type="nucleotide sequence ID" value="NC_002516.2"/>
</dbReference>
<dbReference type="RefSeq" id="WP_003148126.1">
    <property type="nucleotide sequence ID" value="NZ_QZGA01000014.1"/>
</dbReference>
<dbReference type="PDB" id="5LT9">
    <property type="method" value="X-ray"/>
    <property type="resolution" value="3.00 A"/>
    <property type="chains" value="A/B=30-277"/>
</dbReference>
<dbReference type="PDB" id="5LTO">
    <property type="method" value="X-ray"/>
    <property type="resolution" value="3.46 A"/>
    <property type="chains" value="A/B=30-277"/>
</dbReference>
<dbReference type="PDBsum" id="5LT9"/>
<dbReference type="PDBsum" id="5LTO"/>
<dbReference type="SMR" id="Q9HW91"/>
<dbReference type="FunCoup" id="Q9HW91">
    <property type="interactions" value="197"/>
</dbReference>
<dbReference type="STRING" id="208964.PA4310"/>
<dbReference type="PaxDb" id="208964-PA4310"/>
<dbReference type="GeneID" id="881566"/>
<dbReference type="KEGG" id="pae:PA4310"/>
<dbReference type="PATRIC" id="fig|208964.12.peg.4514"/>
<dbReference type="PseudoCAP" id="PA4310"/>
<dbReference type="HOGENOM" id="CLU_000445_107_19_6"/>
<dbReference type="InParanoid" id="Q9HW91"/>
<dbReference type="OrthoDB" id="7021108at2"/>
<dbReference type="PhylomeDB" id="Q9HW91"/>
<dbReference type="BioCyc" id="PAER208964:G1FZ6-4394-MONOMER"/>
<dbReference type="Proteomes" id="UP000002438">
    <property type="component" value="Chromosome"/>
</dbReference>
<dbReference type="GO" id="GO:0005886">
    <property type="term" value="C:plasma membrane"/>
    <property type="evidence" value="ECO:0007669"/>
    <property type="project" value="UniProtKB-SubCell"/>
</dbReference>
<dbReference type="GO" id="GO:0016597">
    <property type="term" value="F:amino acid binding"/>
    <property type="evidence" value="ECO:0000314"/>
    <property type="project" value="PseudoCAP"/>
</dbReference>
<dbReference type="GO" id="GO:0006935">
    <property type="term" value="P:chemotaxis"/>
    <property type="evidence" value="ECO:0000315"/>
    <property type="project" value="PseudoCAP"/>
</dbReference>
<dbReference type="GO" id="GO:0043200">
    <property type="term" value="P:response to amino acid"/>
    <property type="evidence" value="ECO:0000315"/>
    <property type="project" value="PseudoCAP"/>
</dbReference>
<dbReference type="GO" id="GO:0007165">
    <property type="term" value="P:signal transduction"/>
    <property type="evidence" value="ECO:0007669"/>
    <property type="project" value="UniProtKB-KW"/>
</dbReference>
<dbReference type="CDD" id="cd06225">
    <property type="entry name" value="HAMP"/>
    <property type="match status" value="1"/>
</dbReference>
<dbReference type="CDD" id="cd11386">
    <property type="entry name" value="MCP_signal"/>
    <property type="match status" value="1"/>
</dbReference>
<dbReference type="CDD" id="cd12913">
    <property type="entry name" value="PDC1_MCP_like"/>
    <property type="match status" value="1"/>
</dbReference>
<dbReference type="CDD" id="cd12912">
    <property type="entry name" value="PDC2_MCP_like"/>
    <property type="match status" value="1"/>
</dbReference>
<dbReference type="FunFam" id="3.30.450.20:FF:000048">
    <property type="entry name" value="Methyl-accepting chemotaxis protein"/>
    <property type="match status" value="1"/>
</dbReference>
<dbReference type="FunFam" id="3.30.450.20:FF:000132">
    <property type="entry name" value="Methyl-accepting chemotaxis protein PctA"/>
    <property type="match status" value="1"/>
</dbReference>
<dbReference type="FunFam" id="1.10.287.950:FF:000001">
    <property type="entry name" value="Methyl-accepting chemotaxis sensory transducer"/>
    <property type="match status" value="1"/>
</dbReference>
<dbReference type="Gene3D" id="1.10.287.950">
    <property type="entry name" value="Methyl-accepting chemotaxis protein"/>
    <property type="match status" value="1"/>
</dbReference>
<dbReference type="Gene3D" id="3.30.450.20">
    <property type="entry name" value="PAS domain"/>
    <property type="match status" value="2"/>
</dbReference>
<dbReference type="InterPro" id="IPR033479">
    <property type="entry name" value="dCache_1"/>
</dbReference>
<dbReference type="InterPro" id="IPR003660">
    <property type="entry name" value="HAMP_dom"/>
</dbReference>
<dbReference type="InterPro" id="IPR004089">
    <property type="entry name" value="MCPsignal_dom"/>
</dbReference>
<dbReference type="InterPro" id="IPR029151">
    <property type="entry name" value="Sensor-like_sf"/>
</dbReference>
<dbReference type="PANTHER" id="PTHR32089:SF39">
    <property type="entry name" value="METHYL-ACCEPTING CHEMOTAXIS PROTEIN HLYB"/>
    <property type="match status" value="1"/>
</dbReference>
<dbReference type="PANTHER" id="PTHR32089">
    <property type="entry name" value="METHYL-ACCEPTING CHEMOTAXIS PROTEIN MCPB"/>
    <property type="match status" value="1"/>
</dbReference>
<dbReference type="Pfam" id="PF02743">
    <property type="entry name" value="dCache_1"/>
    <property type="match status" value="1"/>
</dbReference>
<dbReference type="Pfam" id="PF00672">
    <property type="entry name" value="HAMP"/>
    <property type="match status" value="1"/>
</dbReference>
<dbReference type="Pfam" id="PF00015">
    <property type="entry name" value="MCPsignal"/>
    <property type="match status" value="1"/>
</dbReference>
<dbReference type="SMART" id="SM00304">
    <property type="entry name" value="HAMP"/>
    <property type="match status" value="2"/>
</dbReference>
<dbReference type="SMART" id="SM00283">
    <property type="entry name" value="MA"/>
    <property type="match status" value="1"/>
</dbReference>
<dbReference type="SUPFAM" id="SSF58104">
    <property type="entry name" value="Methyl-accepting chemotaxis protein (MCP) signaling domain"/>
    <property type="match status" value="1"/>
</dbReference>
<dbReference type="SUPFAM" id="SSF103190">
    <property type="entry name" value="Sensory domain-like"/>
    <property type="match status" value="1"/>
</dbReference>
<dbReference type="PROSITE" id="PS50111">
    <property type="entry name" value="CHEMOTAXIS_TRANSDUC_2"/>
    <property type="match status" value="1"/>
</dbReference>
<dbReference type="PROSITE" id="PS50885">
    <property type="entry name" value="HAMP"/>
    <property type="match status" value="1"/>
</dbReference>
<gene>
    <name type="primary">pctB</name>
    <name type="ordered locus">PA4310</name>
</gene>
<sequence>MIKSLKFSHKILLAAALVVIATFSLFTLYNDSLQRASIREDLEDYLHEMGEITASNVQNWLSGRILLIENLAQTLARDHSPETTQALLEQPLLGSTFLFTYLGQTDGTYTARPTSDLPADYDPRRRPWYNAATSAGQTTLTEPYMEPAIHELVLTIASPARQGGQPFGVVGGDLSLQTVVKIINSLDFGGMGYAFLVSGDGKILVHPDKDQVMKSLSDVYPRNTPKIGSGFSEAELHGNTRILSFSPVKGLSGLDWYIGISVDKDKAYAMLTKLRTSAIVAALIAVVAIVLLLGMLIRVLMQPLTDMGRAMQDIAQGEGDLTKRLKVTSNDEFGALAISFNRFVERIHESIREVAGTARQLHDVAQLVVNASNSSMANSDEQSNRTNSVAAAINELGAAAQEIARNAADASHHASDANHQAEDGKQVVEQTIRAMNELSEKISASCANIEALNSRTVNIGQILEVIKGISEQTNLLALNAAIEAARAGEAGRGFAVVADEVRNLAHRAQESAQQIQKMIEELQIGAQEAVSTMTESQRYSLESVEIANRAGERLSSVTGRIAEIDGMNQSVATATEEQTAVVDSLNMDITEINTLNQEGVENLQATLRACGELETQAGRLRQLVDSFKI</sequence>
<feature type="chain" id="PRO_0000424850" description="Methyl-accepting chemotaxis protein PctB">
    <location>
        <begin position="1"/>
        <end position="629"/>
    </location>
</feature>
<feature type="topological domain" description="Cytoplasmic" evidence="1">
    <location>
        <begin position="1"/>
        <end position="10"/>
    </location>
</feature>
<feature type="transmembrane region" description="Helical" evidence="1">
    <location>
        <begin position="11"/>
        <end position="31"/>
    </location>
</feature>
<feature type="topological domain" description="Periplasmic" evidence="1">
    <location>
        <begin position="32"/>
        <end position="276"/>
    </location>
</feature>
<feature type="transmembrane region" description="Helical" evidence="1">
    <location>
        <begin position="277"/>
        <end position="297"/>
    </location>
</feature>
<feature type="topological domain" description="Cytoplasmic" evidence="1">
    <location>
        <begin position="298"/>
        <end position="629"/>
    </location>
</feature>
<feature type="domain" description="Cache" evidence="1">
    <location>
        <begin position="37"/>
        <end position="260"/>
    </location>
</feature>
<feature type="domain" description="HAMP" evidence="2">
    <location>
        <begin position="298"/>
        <end position="352"/>
    </location>
</feature>
<feature type="domain" description="Methyl-accepting transducer" evidence="3">
    <location>
        <begin position="357"/>
        <end position="593"/>
    </location>
</feature>
<feature type="region of interest" description="Disordered" evidence="4">
    <location>
        <begin position="405"/>
        <end position="424"/>
    </location>
</feature>
<feature type="compositionally biased region" description="Basic and acidic residues" evidence="4">
    <location>
        <begin position="410"/>
        <end position="424"/>
    </location>
</feature>
<feature type="binding site" evidence="8 12">
    <location>
        <position position="109"/>
    </location>
    <ligand>
        <name>L-arginine</name>
        <dbReference type="ChEBI" id="CHEBI:32682"/>
    </ligand>
</feature>
<feature type="binding site" evidence="8 12">
    <location>
        <position position="115"/>
    </location>
    <ligand>
        <name>L-arginine</name>
        <dbReference type="ChEBI" id="CHEBI:32682"/>
    </ligand>
</feature>
<feature type="binding site" evidence="8 13">
    <location>
        <position position="115"/>
    </location>
    <ligand>
        <name>L-glutamine</name>
        <dbReference type="ChEBI" id="CHEBI:58359"/>
    </ligand>
</feature>
<feature type="binding site" evidence="8 12">
    <location>
        <position position="121"/>
    </location>
    <ligand>
        <name>L-arginine</name>
        <dbReference type="ChEBI" id="CHEBI:32682"/>
    </ligand>
</feature>
<feature type="binding site" evidence="8 13">
    <location>
        <position position="121"/>
    </location>
    <ligand>
        <name>L-glutamine</name>
        <dbReference type="ChEBI" id="CHEBI:58359"/>
    </ligand>
</feature>
<feature type="binding site" evidence="8 12">
    <location>
        <begin position="126"/>
        <end position="128"/>
    </location>
    <ligand>
        <name>L-arginine</name>
        <dbReference type="ChEBI" id="CHEBI:32682"/>
    </ligand>
</feature>
<feature type="binding site" evidence="8 13">
    <location>
        <begin position="126"/>
        <end position="128"/>
    </location>
    <ligand>
        <name>L-glutamine</name>
        <dbReference type="ChEBI" id="CHEBI:58359"/>
    </ligand>
</feature>
<feature type="binding site" evidence="8 13">
    <location>
        <begin position="144"/>
        <end position="146"/>
    </location>
    <ligand>
        <name>L-glutamine</name>
        <dbReference type="ChEBI" id="CHEBI:58359"/>
    </ligand>
</feature>
<feature type="binding site" evidence="8 12">
    <location>
        <position position="146"/>
    </location>
    <ligand>
        <name>L-arginine</name>
        <dbReference type="ChEBI" id="CHEBI:32682"/>
    </ligand>
</feature>
<feature type="binding site" evidence="8 12">
    <location>
        <position position="173"/>
    </location>
    <ligand>
        <name>L-arginine</name>
        <dbReference type="ChEBI" id="CHEBI:32682"/>
    </ligand>
</feature>
<feature type="binding site" evidence="8 13">
    <location>
        <position position="173"/>
    </location>
    <ligand>
        <name>L-glutamine</name>
        <dbReference type="ChEBI" id="CHEBI:58359"/>
    </ligand>
</feature>
<feature type="sequence conflict" description="In Ref. 1; BAA23413." evidence="10" ref="1">
    <original>A</original>
    <variation>E</variation>
    <location>
        <position position="16"/>
    </location>
</feature>
<feature type="sequence conflict" description="In Ref. 1; BAA23413." evidence="10" ref="1">
    <original>R</original>
    <variation>L</variation>
    <location>
        <position position="608"/>
    </location>
</feature>
<feature type="helix" evidence="16">
    <location>
        <begin position="42"/>
        <end position="77"/>
    </location>
</feature>
<feature type="helix" evidence="16">
    <location>
        <begin position="81"/>
        <end position="88"/>
    </location>
</feature>
<feature type="helix" evidence="16">
    <location>
        <begin position="91"/>
        <end position="94"/>
    </location>
</feature>
<feature type="strand" evidence="16">
    <location>
        <begin position="100"/>
        <end position="104"/>
    </location>
</feature>
<feature type="strand" evidence="16">
    <location>
        <begin position="109"/>
        <end position="113"/>
    </location>
</feature>
<feature type="helix" evidence="16">
    <location>
        <begin position="123"/>
        <end position="125"/>
    </location>
</feature>
<feature type="helix" evidence="16">
    <location>
        <begin position="127"/>
        <end position="135"/>
    </location>
</feature>
<feature type="strand" evidence="17">
    <location>
        <begin position="136"/>
        <end position="140"/>
    </location>
</feature>
<feature type="turn" evidence="16">
    <location>
        <begin position="147"/>
        <end position="149"/>
    </location>
</feature>
<feature type="strand" evidence="16">
    <location>
        <begin position="151"/>
        <end position="164"/>
    </location>
</feature>
<feature type="strand" evidence="16">
    <location>
        <begin position="166"/>
        <end position="175"/>
    </location>
</feature>
<feature type="helix" evidence="16">
    <location>
        <begin position="176"/>
        <end position="183"/>
    </location>
</feature>
<feature type="strand" evidence="16">
    <location>
        <begin position="190"/>
        <end position="198"/>
    </location>
</feature>
<feature type="strand" evidence="16">
    <location>
        <begin position="201"/>
        <end position="205"/>
    </location>
</feature>
<feature type="strand" evidence="16">
    <location>
        <begin position="207"/>
        <end position="211"/>
    </location>
</feature>
<feature type="helix" evidence="16">
    <location>
        <begin position="216"/>
        <end position="219"/>
    </location>
</feature>
<feature type="strand" evidence="16">
    <location>
        <begin position="227"/>
        <end position="230"/>
    </location>
</feature>
<feature type="strand" evidence="16">
    <location>
        <begin position="232"/>
        <end position="236"/>
    </location>
</feature>
<feature type="strand" evidence="16">
    <location>
        <begin position="239"/>
        <end position="247"/>
    </location>
</feature>
<feature type="strand" evidence="16">
    <location>
        <begin position="256"/>
        <end position="263"/>
    </location>
</feature>
<feature type="helix" evidence="16">
    <location>
        <begin position="264"/>
        <end position="267"/>
    </location>
</feature>
<feature type="strand" evidence="16">
    <location>
        <begin position="274"/>
        <end position="277"/>
    </location>
</feature>
<name>PCTB_PSEAE</name>